<accession>A1S2Q1</accession>
<dbReference type="EMBL" id="CP000507">
    <property type="protein sequence ID" value="ABL98657.1"/>
    <property type="molecule type" value="Genomic_DNA"/>
</dbReference>
<dbReference type="SMR" id="A1S2Q1"/>
<dbReference type="STRING" id="326297.Sama_0447"/>
<dbReference type="KEGG" id="saz:Sama_0447"/>
<dbReference type="eggNOG" id="COG0254">
    <property type="taxonomic scope" value="Bacteria"/>
</dbReference>
<dbReference type="HOGENOM" id="CLU_114306_4_3_6"/>
<dbReference type="OrthoDB" id="9803251at2"/>
<dbReference type="Proteomes" id="UP000009175">
    <property type="component" value="Chromosome"/>
</dbReference>
<dbReference type="GO" id="GO:1990904">
    <property type="term" value="C:ribonucleoprotein complex"/>
    <property type="evidence" value="ECO:0007669"/>
    <property type="project" value="UniProtKB-KW"/>
</dbReference>
<dbReference type="GO" id="GO:0005840">
    <property type="term" value="C:ribosome"/>
    <property type="evidence" value="ECO:0007669"/>
    <property type="project" value="UniProtKB-KW"/>
</dbReference>
<dbReference type="GO" id="GO:0046872">
    <property type="term" value="F:metal ion binding"/>
    <property type="evidence" value="ECO:0007669"/>
    <property type="project" value="UniProtKB-KW"/>
</dbReference>
<dbReference type="GO" id="GO:0019843">
    <property type="term" value="F:rRNA binding"/>
    <property type="evidence" value="ECO:0007669"/>
    <property type="project" value="UniProtKB-KW"/>
</dbReference>
<dbReference type="GO" id="GO:0003735">
    <property type="term" value="F:structural constituent of ribosome"/>
    <property type="evidence" value="ECO:0007669"/>
    <property type="project" value="InterPro"/>
</dbReference>
<dbReference type="GO" id="GO:0006412">
    <property type="term" value="P:translation"/>
    <property type="evidence" value="ECO:0007669"/>
    <property type="project" value="UniProtKB-UniRule"/>
</dbReference>
<dbReference type="Gene3D" id="4.10.830.30">
    <property type="entry name" value="Ribosomal protein L31"/>
    <property type="match status" value="1"/>
</dbReference>
<dbReference type="HAMAP" id="MF_00501">
    <property type="entry name" value="Ribosomal_bL31_1"/>
    <property type="match status" value="1"/>
</dbReference>
<dbReference type="InterPro" id="IPR034704">
    <property type="entry name" value="Ribosomal_bL28/bL31-like_sf"/>
</dbReference>
<dbReference type="InterPro" id="IPR002150">
    <property type="entry name" value="Ribosomal_bL31"/>
</dbReference>
<dbReference type="InterPro" id="IPR027491">
    <property type="entry name" value="Ribosomal_bL31_A"/>
</dbReference>
<dbReference type="InterPro" id="IPR042105">
    <property type="entry name" value="Ribosomal_bL31_sf"/>
</dbReference>
<dbReference type="NCBIfam" id="TIGR00105">
    <property type="entry name" value="L31"/>
    <property type="match status" value="1"/>
</dbReference>
<dbReference type="NCBIfam" id="NF000612">
    <property type="entry name" value="PRK00019.1"/>
    <property type="match status" value="1"/>
</dbReference>
<dbReference type="NCBIfam" id="NF001809">
    <property type="entry name" value="PRK00528.1"/>
    <property type="match status" value="1"/>
</dbReference>
<dbReference type="PANTHER" id="PTHR33280">
    <property type="entry name" value="50S RIBOSOMAL PROTEIN L31, CHLOROPLASTIC"/>
    <property type="match status" value="1"/>
</dbReference>
<dbReference type="PANTHER" id="PTHR33280:SF6">
    <property type="entry name" value="LARGE RIBOSOMAL SUBUNIT PROTEIN BL31A"/>
    <property type="match status" value="1"/>
</dbReference>
<dbReference type="Pfam" id="PF01197">
    <property type="entry name" value="Ribosomal_L31"/>
    <property type="match status" value="1"/>
</dbReference>
<dbReference type="PRINTS" id="PR01249">
    <property type="entry name" value="RIBOSOMALL31"/>
</dbReference>
<dbReference type="SUPFAM" id="SSF143800">
    <property type="entry name" value="L28p-like"/>
    <property type="match status" value="1"/>
</dbReference>
<dbReference type="PROSITE" id="PS01143">
    <property type="entry name" value="RIBOSOMAL_L31"/>
    <property type="match status" value="1"/>
</dbReference>
<comment type="function">
    <text evidence="1">Binds the 23S rRNA.</text>
</comment>
<comment type="cofactor">
    <cofactor evidence="1">
        <name>Zn(2+)</name>
        <dbReference type="ChEBI" id="CHEBI:29105"/>
    </cofactor>
    <text evidence="1">Binds 1 zinc ion per subunit.</text>
</comment>
<comment type="subunit">
    <text evidence="1">Part of the 50S ribosomal subunit.</text>
</comment>
<comment type="similarity">
    <text evidence="1">Belongs to the bacterial ribosomal protein bL31 family. Type A subfamily.</text>
</comment>
<proteinExistence type="inferred from homology"/>
<keyword id="KW-0479">Metal-binding</keyword>
<keyword id="KW-1185">Reference proteome</keyword>
<keyword id="KW-0687">Ribonucleoprotein</keyword>
<keyword id="KW-0689">Ribosomal protein</keyword>
<keyword id="KW-0694">RNA-binding</keyword>
<keyword id="KW-0699">rRNA-binding</keyword>
<keyword id="KW-0862">Zinc</keyword>
<protein>
    <recommendedName>
        <fullName evidence="1">Large ribosomal subunit protein bL31</fullName>
    </recommendedName>
    <alternativeName>
        <fullName evidence="2">50S ribosomal protein L31</fullName>
    </alternativeName>
</protein>
<reference key="1">
    <citation type="submission" date="2006-12" db="EMBL/GenBank/DDBJ databases">
        <title>Complete sequence of Shewanella amazonensis SB2B.</title>
        <authorList>
            <consortium name="US DOE Joint Genome Institute"/>
            <person name="Copeland A."/>
            <person name="Lucas S."/>
            <person name="Lapidus A."/>
            <person name="Barry K."/>
            <person name="Detter J.C."/>
            <person name="Glavina del Rio T."/>
            <person name="Hammon N."/>
            <person name="Israni S."/>
            <person name="Dalin E."/>
            <person name="Tice H."/>
            <person name="Pitluck S."/>
            <person name="Munk A.C."/>
            <person name="Brettin T."/>
            <person name="Bruce D."/>
            <person name="Han C."/>
            <person name="Tapia R."/>
            <person name="Gilna P."/>
            <person name="Schmutz J."/>
            <person name="Larimer F."/>
            <person name="Land M."/>
            <person name="Hauser L."/>
            <person name="Kyrpides N."/>
            <person name="Mikhailova N."/>
            <person name="Fredrickson J."/>
            <person name="Richardson P."/>
        </authorList>
    </citation>
    <scope>NUCLEOTIDE SEQUENCE [LARGE SCALE GENOMIC DNA]</scope>
    <source>
        <strain>ATCC BAA-1098 / SB2B</strain>
    </source>
</reference>
<name>RL31_SHEAM</name>
<organism>
    <name type="scientific">Shewanella amazonensis (strain ATCC BAA-1098 / SB2B)</name>
    <dbReference type="NCBI Taxonomy" id="326297"/>
    <lineage>
        <taxon>Bacteria</taxon>
        <taxon>Pseudomonadati</taxon>
        <taxon>Pseudomonadota</taxon>
        <taxon>Gammaproteobacteria</taxon>
        <taxon>Alteromonadales</taxon>
        <taxon>Shewanellaceae</taxon>
        <taxon>Shewanella</taxon>
    </lineage>
</organism>
<sequence>MKPGIHPEYAQITATCTCGNVIKINSTVGKDLHLDVCGACHPFYTGTQKVVDTGGRIDKFNKRFGMLGKK</sequence>
<gene>
    <name evidence="1" type="primary">rpmE</name>
    <name type="ordered locus">Sama_0447</name>
</gene>
<evidence type="ECO:0000255" key="1">
    <source>
        <dbReference type="HAMAP-Rule" id="MF_00501"/>
    </source>
</evidence>
<evidence type="ECO:0000305" key="2"/>
<feature type="chain" id="PRO_1000126726" description="Large ribosomal subunit protein bL31">
    <location>
        <begin position="1"/>
        <end position="70"/>
    </location>
</feature>
<feature type="binding site" evidence="1">
    <location>
        <position position="16"/>
    </location>
    <ligand>
        <name>Zn(2+)</name>
        <dbReference type="ChEBI" id="CHEBI:29105"/>
    </ligand>
</feature>
<feature type="binding site" evidence="1">
    <location>
        <position position="18"/>
    </location>
    <ligand>
        <name>Zn(2+)</name>
        <dbReference type="ChEBI" id="CHEBI:29105"/>
    </ligand>
</feature>
<feature type="binding site" evidence="1">
    <location>
        <position position="37"/>
    </location>
    <ligand>
        <name>Zn(2+)</name>
        <dbReference type="ChEBI" id="CHEBI:29105"/>
    </ligand>
</feature>
<feature type="binding site" evidence="1">
    <location>
        <position position="40"/>
    </location>
    <ligand>
        <name>Zn(2+)</name>
        <dbReference type="ChEBI" id="CHEBI:29105"/>
    </ligand>
</feature>